<sequence length="469" mass="51679">MNPNQKIITIGSICMVVGIISLILQIGNIISIWISHSIQTGSQNHTGICNQSIITYKNSTWVNQTYVNISNTNVVAGKGTTPVILAGNSSLCPIRGWAIYSKDNGIRIGSKGDVFVIREPFISCSHLECRTFFLTQGALLNDKHSNGTVKDRSPYRALMSCPVGEAPSPYNSRFESVAWSACACHDGMGWLTIGISGPDDEAVAVLKYNGIITETIKSWRKKILRTQESECVCVNGSCFTIMTDGPSDGPASYKIFKIEKGKVTKSIELDAPNSHYEECSCYPDTGKVMCVCRDNWHGSNRPWVSFDQNLDYQIGYICSGVFGDNPRPKDGKGSCGPVYVDGANGVKGFSYRYGNGVWIGRIKSNSSRQGFEMIWDPNGWTETDSSFFVKQDVVAMTDWSGYSGSFVQHPELTGLDCMRPCFWVELIRGRPKEKTIWTSGSSISFCGVNSDTVDWSWPDGAELPFTIDK</sequence>
<evidence type="ECO:0000255" key="1">
    <source>
        <dbReference type="HAMAP-Rule" id="MF_04071"/>
    </source>
</evidence>
<reference key="1">
    <citation type="submission" date="2007-04" db="EMBL/GenBank/DDBJ databases">
        <title>The NIAID influenza genome sequencing project.</title>
        <authorList>
            <person name="Ghedin E."/>
            <person name="Spiro D."/>
            <person name="Miller N."/>
            <person name="Zaborsky J."/>
            <person name="Feldblyum T."/>
            <person name="Subbu V."/>
            <person name="Shumway M."/>
            <person name="Sparenborg J."/>
            <person name="Groveman L."/>
            <person name="Halpin R."/>
            <person name="Sitz J."/>
            <person name="Koo H."/>
            <person name="Salzberg S.L."/>
            <person name="Webster R.G."/>
            <person name="Hoffmann E."/>
            <person name="Krauss S."/>
            <person name="Naeve C."/>
            <person name="Bao Y."/>
            <person name="Bolotov P."/>
            <person name="Dernovoy D."/>
            <person name="Kiryutin B."/>
            <person name="Lipman D.J."/>
            <person name="Tatusova T."/>
        </authorList>
    </citation>
    <scope>NUCLEOTIDE SEQUENCE [GENOMIC RNA]</scope>
</reference>
<reference key="2">
    <citation type="submission" date="2007-04" db="EMBL/GenBank/DDBJ databases">
        <authorList>
            <consortium name="The NIAID Influenza Genome Sequencing Consortium"/>
        </authorList>
    </citation>
    <scope>NUCLEOTIDE SEQUENCE [GENOMIC RNA]</scope>
</reference>
<keyword id="KW-0106">Calcium</keyword>
<keyword id="KW-1015">Disulfide bond</keyword>
<keyword id="KW-0325">Glycoprotein</keyword>
<keyword id="KW-0326">Glycosidase</keyword>
<keyword id="KW-1032">Host cell membrane</keyword>
<keyword id="KW-1043">Host membrane</keyword>
<keyword id="KW-0378">Hydrolase</keyword>
<keyword id="KW-0472">Membrane</keyword>
<keyword id="KW-0479">Metal-binding</keyword>
<keyword id="KW-0735">Signal-anchor</keyword>
<keyword id="KW-0812">Transmembrane</keyword>
<keyword id="KW-1133">Transmembrane helix</keyword>
<keyword id="KW-0946">Virion</keyword>
<name>NRAM_I45A0</name>
<organism>
    <name type="scientific">Influenza A virus (strain A/USA:Huston/AA/1945 H1N1)</name>
    <dbReference type="NCBI Taxonomy" id="425551"/>
    <lineage>
        <taxon>Viruses</taxon>
        <taxon>Riboviria</taxon>
        <taxon>Orthornavirae</taxon>
        <taxon>Negarnaviricota</taxon>
        <taxon>Polyploviricotina</taxon>
        <taxon>Insthoviricetes</taxon>
        <taxon>Articulavirales</taxon>
        <taxon>Orthomyxoviridae</taxon>
        <taxon>Alphainfluenzavirus</taxon>
        <taxon>Alphainfluenzavirus influenzae</taxon>
        <taxon>Influenza A virus</taxon>
    </lineage>
</organism>
<comment type="function">
    <text evidence="1">Catalyzes the removal of terminal sialic acid residues from viral and cellular glycoconjugates. Cleaves off the terminal sialic acids on the glycosylated HA during virus budding to facilitate virus release. Additionally helps virus spread through the circulation by further removing sialic acids from the cell surface. These cleavages prevent self-aggregation and ensure the efficient spread of the progeny virus from cell to cell. Otherwise, infection would be limited to one round of replication. Described as a receptor-destroying enzyme because it cleaves a terminal sialic acid from the cellular receptors. May facilitate viral invasion of the upper airways by cleaving the sialic acid moieties on the mucin of the airway epithelial cells. Likely to plays a role in the budding process through its association with lipid rafts during intracellular transport. May additionally display a raft-association independent effect on budding. Plays a role in the determination of host range restriction on replication and virulence. Sialidase activity in late endosome/lysosome traffic seems to enhance virus replication.</text>
</comment>
<comment type="catalytic activity">
    <reaction evidence="1">
        <text>Hydrolysis of alpha-(2-&gt;3)-, alpha-(2-&gt;6)-, alpha-(2-&gt;8)- glycosidic linkages of terminal sialic acid residues in oligosaccharides, glycoproteins, glycolipids, colominic acid and synthetic substrates.</text>
        <dbReference type="EC" id="3.2.1.18"/>
    </reaction>
</comment>
<comment type="cofactor">
    <cofactor evidence="1">
        <name>Ca(2+)</name>
        <dbReference type="ChEBI" id="CHEBI:29108"/>
    </cofactor>
</comment>
<comment type="activity regulation">
    <text evidence="1">Inhibited by the neuraminidase inhibitors zanamivir (Relenza) and oseltamivir (Tamiflu). These drugs interfere with the release of progeny virus from infected cells and are effective against all influenza strains. Resistance to neuraminidase inhibitors is quite rare.</text>
</comment>
<comment type="subunit">
    <text evidence="1">Homotetramer.</text>
</comment>
<comment type="subcellular location">
    <subcellularLocation>
        <location evidence="1">Virion membrane</location>
    </subcellularLocation>
    <subcellularLocation>
        <location evidence="1">Host apical cell membrane</location>
        <topology evidence="1">Single-pass type II membrane protein</topology>
    </subcellularLocation>
    <text evidence="1">Preferentially accumulates at the apical plasma membrane in infected polarized epithelial cells, which is the virus assembly site. Uses lipid rafts for cell surface transport and apical sorting. In the virion, forms a mushroom-shaped spike on the surface of the membrane.</text>
</comment>
<comment type="domain">
    <text evidence="1">Intact N-terminus is essential for virion morphogenesis. Possesses two apical sorting signals, one in the ectodomain, which is likely to be a glycan, and the other in the transmembrane domain. The transmembrane domain also plays a role in lipid raft association.</text>
</comment>
<comment type="PTM">
    <text evidence="1">N-glycosylated.</text>
</comment>
<comment type="miscellaneous">
    <text>The influenza A genome consist of 8 RNA segments. Genetic variation of hemagglutinin and/or neuraminidase genes results in the emergence of new influenza strains. The mechanism of variation can be the result of point mutations or the result of genetic reassortment between segments of two different strains.</text>
</comment>
<comment type="similarity">
    <text evidence="1">Belongs to the glycosyl hydrolase 34 family.</text>
</comment>
<feature type="chain" id="PRO_0000372968" description="Neuraminidase">
    <location>
        <begin position="1"/>
        <end position="469"/>
    </location>
</feature>
<feature type="topological domain" description="Intravirion" evidence="1">
    <location>
        <begin position="1"/>
        <end position="6"/>
    </location>
</feature>
<feature type="transmembrane region" description="Helical" evidence="1">
    <location>
        <begin position="7"/>
        <end position="27"/>
    </location>
</feature>
<feature type="topological domain" description="Virion surface" evidence="1">
    <location>
        <begin position="28"/>
        <end position="469"/>
    </location>
</feature>
<feature type="region of interest" description="Involved in apical transport and lipid raft association" evidence="1">
    <location>
        <begin position="11"/>
        <end position="33"/>
    </location>
</feature>
<feature type="region of interest" description="Hypervariable stalk region" evidence="1">
    <location>
        <begin position="36"/>
        <end position="90"/>
    </location>
</feature>
<feature type="region of interest" description="Head of neuraminidase" evidence="1">
    <location>
        <begin position="91"/>
        <end position="469"/>
    </location>
</feature>
<feature type="active site" description="Proton donor/acceptor" evidence="1">
    <location>
        <position position="151"/>
    </location>
</feature>
<feature type="active site" description="Nucleophile" evidence="1">
    <location>
        <position position="402"/>
    </location>
</feature>
<feature type="binding site" evidence="1">
    <location>
        <position position="118"/>
    </location>
    <ligand>
        <name>substrate</name>
    </ligand>
</feature>
<feature type="binding site" evidence="1">
    <location>
        <position position="152"/>
    </location>
    <ligand>
        <name>substrate</name>
    </ligand>
</feature>
<feature type="binding site" evidence="1">
    <location>
        <begin position="277"/>
        <end position="278"/>
    </location>
    <ligand>
        <name>substrate</name>
    </ligand>
</feature>
<feature type="binding site" evidence="1">
    <location>
        <position position="293"/>
    </location>
    <ligand>
        <name>substrate</name>
    </ligand>
</feature>
<feature type="binding site" evidence="1">
    <location>
        <position position="294"/>
    </location>
    <ligand>
        <name>Ca(2+)</name>
        <dbReference type="ChEBI" id="CHEBI:29108"/>
    </ligand>
</feature>
<feature type="binding site" evidence="1">
    <location>
        <position position="298"/>
    </location>
    <ligand>
        <name>Ca(2+)</name>
        <dbReference type="ChEBI" id="CHEBI:29108"/>
    </ligand>
</feature>
<feature type="binding site" evidence="1">
    <location>
        <position position="324"/>
    </location>
    <ligand>
        <name>Ca(2+)</name>
        <dbReference type="ChEBI" id="CHEBI:29108"/>
    </ligand>
</feature>
<feature type="binding site" evidence="1">
    <location>
        <position position="344"/>
    </location>
    <ligand>
        <name>Ca(2+)</name>
        <dbReference type="ChEBI" id="CHEBI:29108"/>
    </ligand>
</feature>
<feature type="binding site" evidence="1">
    <location>
        <position position="368"/>
    </location>
    <ligand>
        <name>substrate</name>
    </ligand>
</feature>
<feature type="glycosylation site" description="N-linked (GlcNAc...) asparagine; by host" evidence="1">
    <location>
        <position position="44"/>
    </location>
</feature>
<feature type="glycosylation site" description="N-linked (GlcNAc...) asparagine; by host" evidence="1">
    <location>
        <position position="50"/>
    </location>
</feature>
<feature type="glycosylation site" description="N-linked (GlcNAc...) asparagine; by host" evidence="1">
    <location>
        <position position="58"/>
    </location>
</feature>
<feature type="glycosylation site" description="N-linked (GlcNAc...) asparagine; by host" evidence="1">
    <location>
        <position position="63"/>
    </location>
</feature>
<feature type="glycosylation site" description="N-linked (GlcNAc...) asparagine; by host" evidence="1">
    <location>
        <position position="68"/>
    </location>
</feature>
<feature type="glycosylation site" description="N-linked (GlcNAc...) asparagine; by host" evidence="1">
    <location>
        <position position="88"/>
    </location>
</feature>
<feature type="glycosylation site" description="N-linked (GlcNAc...) asparagine; by host" evidence="1">
    <location>
        <position position="146"/>
    </location>
</feature>
<feature type="glycosylation site" description="N-linked (GlcNAc...) asparagine; by host" evidence="1">
    <location>
        <position position="235"/>
    </location>
</feature>
<feature type="glycosylation site" description="N-linked (GlcNAc...) asparagine; by host" evidence="1">
    <location>
        <position position="365"/>
    </location>
</feature>
<feature type="disulfide bond" evidence="1">
    <location>
        <begin position="92"/>
        <end position="417"/>
    </location>
</feature>
<feature type="disulfide bond" evidence="1">
    <location>
        <begin position="124"/>
        <end position="129"/>
    </location>
</feature>
<feature type="disulfide bond" evidence="1">
    <location>
        <begin position="184"/>
        <end position="231"/>
    </location>
</feature>
<feature type="disulfide bond" evidence="1">
    <location>
        <begin position="233"/>
        <end position="238"/>
    </location>
</feature>
<feature type="disulfide bond" evidence="1">
    <location>
        <begin position="279"/>
        <end position="292"/>
    </location>
</feature>
<feature type="disulfide bond" evidence="1">
    <location>
        <begin position="281"/>
        <end position="290"/>
    </location>
</feature>
<feature type="disulfide bond" evidence="1">
    <location>
        <begin position="318"/>
        <end position="335"/>
    </location>
</feature>
<feature type="disulfide bond" evidence="1">
    <location>
        <begin position="421"/>
        <end position="446"/>
    </location>
</feature>
<protein>
    <recommendedName>
        <fullName evidence="1">Neuraminidase</fullName>
        <ecNumber evidence="1">3.2.1.18</ecNumber>
    </recommendedName>
</protein>
<dbReference type="EC" id="3.2.1.18" evidence="1"/>
<dbReference type="EMBL" id="CY021711">
    <property type="protein sequence ID" value="ABP49330.1"/>
    <property type="molecule type" value="Viral_cRNA"/>
</dbReference>
<dbReference type="SMR" id="A4U6V5"/>
<dbReference type="CAZy" id="GH34">
    <property type="family name" value="Glycoside Hydrolase Family 34"/>
</dbReference>
<dbReference type="GlyCosmos" id="A4U6V5">
    <property type="glycosylation" value="9 sites, No reported glycans"/>
</dbReference>
<dbReference type="PRO" id="PR:A4U6V5"/>
<dbReference type="Proteomes" id="UP000008433">
    <property type="component" value="Genome"/>
</dbReference>
<dbReference type="GO" id="GO:0020002">
    <property type="term" value="C:host cell plasma membrane"/>
    <property type="evidence" value="ECO:0007669"/>
    <property type="project" value="UniProtKB-SubCell"/>
</dbReference>
<dbReference type="GO" id="GO:0016020">
    <property type="term" value="C:membrane"/>
    <property type="evidence" value="ECO:0007669"/>
    <property type="project" value="UniProtKB-UniRule"/>
</dbReference>
<dbReference type="GO" id="GO:0055036">
    <property type="term" value="C:virion membrane"/>
    <property type="evidence" value="ECO:0007669"/>
    <property type="project" value="UniProtKB-SubCell"/>
</dbReference>
<dbReference type="GO" id="GO:0004308">
    <property type="term" value="F:exo-alpha-sialidase activity"/>
    <property type="evidence" value="ECO:0007669"/>
    <property type="project" value="UniProtKB-UniRule"/>
</dbReference>
<dbReference type="GO" id="GO:0046872">
    <property type="term" value="F:metal ion binding"/>
    <property type="evidence" value="ECO:0007669"/>
    <property type="project" value="UniProtKB-UniRule"/>
</dbReference>
<dbReference type="GO" id="GO:0005975">
    <property type="term" value="P:carbohydrate metabolic process"/>
    <property type="evidence" value="ECO:0007669"/>
    <property type="project" value="InterPro"/>
</dbReference>
<dbReference type="GO" id="GO:0046761">
    <property type="term" value="P:viral budding from plasma membrane"/>
    <property type="evidence" value="ECO:0007669"/>
    <property type="project" value="UniProtKB-UniRule"/>
</dbReference>
<dbReference type="CDD" id="cd15483">
    <property type="entry name" value="Influenza_NA"/>
    <property type="match status" value="1"/>
</dbReference>
<dbReference type="FunFam" id="2.120.10.10:FF:000001">
    <property type="entry name" value="Neuraminidase"/>
    <property type="match status" value="1"/>
</dbReference>
<dbReference type="Gene3D" id="2.120.10.10">
    <property type="match status" value="1"/>
</dbReference>
<dbReference type="HAMAP" id="MF_04071">
    <property type="entry name" value="INFV_NRAM"/>
    <property type="match status" value="1"/>
</dbReference>
<dbReference type="InterPro" id="IPR001860">
    <property type="entry name" value="Glyco_hydro_34"/>
</dbReference>
<dbReference type="InterPro" id="IPR033654">
    <property type="entry name" value="Sialidase_Influenza_A/B"/>
</dbReference>
<dbReference type="InterPro" id="IPR036278">
    <property type="entry name" value="Sialidase_sf"/>
</dbReference>
<dbReference type="Pfam" id="PF00064">
    <property type="entry name" value="Neur"/>
    <property type="match status" value="1"/>
</dbReference>
<dbReference type="SUPFAM" id="SSF50939">
    <property type="entry name" value="Sialidases"/>
    <property type="match status" value="1"/>
</dbReference>
<organismHost>
    <name type="scientific">Aves</name>
    <dbReference type="NCBI Taxonomy" id="8782"/>
</organismHost>
<organismHost>
    <name type="scientific">Homo sapiens</name>
    <name type="common">Human</name>
    <dbReference type="NCBI Taxonomy" id="9606"/>
</organismHost>
<organismHost>
    <name type="scientific">Sus scrofa</name>
    <name type="common">Pig</name>
    <dbReference type="NCBI Taxonomy" id="9823"/>
</organismHost>
<proteinExistence type="inferred from homology"/>
<accession>A4U6V5</accession>
<gene>
    <name evidence="1" type="primary">NA</name>
</gene>